<dbReference type="EMBL" id="CP000075">
    <property type="protein sequence ID" value="AAY36659.1"/>
    <property type="molecule type" value="Genomic_DNA"/>
</dbReference>
<dbReference type="RefSeq" id="WP_003317453.1">
    <property type="nucleotide sequence ID" value="NC_007005.1"/>
</dbReference>
<dbReference type="RefSeq" id="YP_234697.1">
    <property type="nucleotide sequence ID" value="NC_007005.1"/>
</dbReference>
<dbReference type="SMR" id="Q4ZW13"/>
<dbReference type="STRING" id="205918.Psyr_1611"/>
<dbReference type="GeneID" id="77277453"/>
<dbReference type="KEGG" id="psb:Psyr_1611"/>
<dbReference type="PATRIC" id="fig|205918.7.peg.1646"/>
<dbReference type="eggNOG" id="COG0851">
    <property type="taxonomic scope" value="Bacteria"/>
</dbReference>
<dbReference type="HOGENOM" id="CLU_137929_2_1_6"/>
<dbReference type="OrthoDB" id="9802655at2"/>
<dbReference type="Proteomes" id="UP000000426">
    <property type="component" value="Chromosome"/>
</dbReference>
<dbReference type="GO" id="GO:0051301">
    <property type="term" value="P:cell division"/>
    <property type="evidence" value="ECO:0007669"/>
    <property type="project" value="UniProtKB-KW"/>
</dbReference>
<dbReference type="GO" id="GO:0032955">
    <property type="term" value="P:regulation of division septum assembly"/>
    <property type="evidence" value="ECO:0007669"/>
    <property type="project" value="InterPro"/>
</dbReference>
<dbReference type="FunFam" id="3.30.1070.10:FF:000001">
    <property type="entry name" value="Cell division topological specificity factor"/>
    <property type="match status" value="1"/>
</dbReference>
<dbReference type="Gene3D" id="3.30.1070.10">
    <property type="entry name" value="Cell division topological specificity factor MinE"/>
    <property type="match status" value="1"/>
</dbReference>
<dbReference type="HAMAP" id="MF_00262">
    <property type="entry name" value="MinE"/>
    <property type="match status" value="1"/>
</dbReference>
<dbReference type="InterPro" id="IPR005527">
    <property type="entry name" value="MinE"/>
</dbReference>
<dbReference type="InterPro" id="IPR036707">
    <property type="entry name" value="MinE_sf"/>
</dbReference>
<dbReference type="NCBIfam" id="TIGR01215">
    <property type="entry name" value="minE"/>
    <property type="match status" value="1"/>
</dbReference>
<dbReference type="NCBIfam" id="NF001422">
    <property type="entry name" value="PRK00296.1"/>
    <property type="match status" value="1"/>
</dbReference>
<dbReference type="NCBIfam" id="NF010595">
    <property type="entry name" value="PRK13989.1"/>
    <property type="match status" value="1"/>
</dbReference>
<dbReference type="Pfam" id="PF03776">
    <property type="entry name" value="MinE"/>
    <property type="match status" value="1"/>
</dbReference>
<dbReference type="SUPFAM" id="SSF55229">
    <property type="entry name" value="Cell division protein MinE topological specificity domain"/>
    <property type="match status" value="1"/>
</dbReference>
<evidence type="ECO:0000255" key="1">
    <source>
        <dbReference type="HAMAP-Rule" id="MF_00262"/>
    </source>
</evidence>
<protein>
    <recommendedName>
        <fullName evidence="1">Cell division topological specificity factor</fullName>
    </recommendedName>
</protein>
<accession>Q4ZW13</accession>
<name>MINE_PSEU2</name>
<feature type="chain" id="PRO_0000298165" description="Cell division topological specificity factor">
    <location>
        <begin position="1"/>
        <end position="84"/>
    </location>
</feature>
<comment type="function">
    <text evidence="1">Prevents the cell division inhibition by proteins MinC and MinD at internal division sites while permitting inhibition at polar sites. This ensures cell division at the proper site by restricting the formation of a division septum at the midpoint of the long axis of the cell.</text>
</comment>
<comment type="similarity">
    <text evidence="1">Belongs to the MinE family.</text>
</comment>
<reference key="1">
    <citation type="journal article" date="2005" name="Proc. Natl. Acad. Sci. U.S.A.">
        <title>Comparison of the complete genome sequences of Pseudomonas syringae pv. syringae B728a and pv. tomato DC3000.</title>
        <authorList>
            <person name="Feil H."/>
            <person name="Feil W.S."/>
            <person name="Chain P."/>
            <person name="Larimer F."/>
            <person name="Dibartolo G."/>
            <person name="Copeland A."/>
            <person name="Lykidis A."/>
            <person name="Trong S."/>
            <person name="Nolan M."/>
            <person name="Goltsman E."/>
            <person name="Thiel J."/>
            <person name="Malfatti S."/>
            <person name="Loper J.E."/>
            <person name="Lapidus A."/>
            <person name="Detter J.C."/>
            <person name="Land M."/>
            <person name="Richardson P.M."/>
            <person name="Kyrpides N.C."/>
            <person name="Ivanova N."/>
            <person name="Lindow S.E."/>
        </authorList>
    </citation>
    <scope>NUCLEOTIDE SEQUENCE [LARGE SCALE GENOMIC DNA]</scope>
    <source>
        <strain>B728a</strain>
    </source>
</reference>
<organism>
    <name type="scientific">Pseudomonas syringae pv. syringae (strain B728a)</name>
    <dbReference type="NCBI Taxonomy" id="205918"/>
    <lineage>
        <taxon>Bacteria</taxon>
        <taxon>Pseudomonadati</taxon>
        <taxon>Pseudomonadota</taxon>
        <taxon>Gammaproteobacteria</taxon>
        <taxon>Pseudomonadales</taxon>
        <taxon>Pseudomonadaceae</taxon>
        <taxon>Pseudomonas</taxon>
        <taxon>Pseudomonas syringae</taxon>
    </lineage>
</organism>
<proteinExistence type="inferred from homology"/>
<keyword id="KW-0131">Cell cycle</keyword>
<keyword id="KW-0132">Cell division</keyword>
<gene>
    <name evidence="1" type="primary">minE</name>
    <name type="ordered locus">Psyr_1611</name>
</gene>
<sequence>MNIFDFFRDRKKGSTASVAKERLQIIVAHERGQRSTPDYLPALQKELVEVIRKYVNIESDQVQVALESQGSCSILELNITLPDR</sequence>